<name>PTXB_SHIFL</name>
<protein>
    <recommendedName>
        <fullName>Phosphotransferase enzyme IIB component GlvB</fullName>
        <ecNumber>2.7.1.-</ecNumber>
    </recommendedName>
    <alternativeName>
        <fullName>PTS system EIIB component</fullName>
    </alternativeName>
</protein>
<sequence length="161" mass="17626">MFSNHADMMLTQIAIGLCFTLLYFVVFRTLILQFNMCTPGREDAEVKLYSKAEYKASRGQTTAAEPKKELDQAAGILQALGGVGNISSINNCATRLRIALHDMSQTLDDEVFKKLGAHGVFRSGDAIQVIIGLHVSQLREQLDSLINSHQSAENVAITEAV</sequence>
<gene>
    <name type="primary">glvB</name>
    <name type="ordered locus">SF3780</name>
    <name type="ordered locus">S3989</name>
</gene>
<comment type="function">
    <text evidence="1">The phosphoenolpyruvate-dependent sugar phosphotransferase system (sugar PTS), a major carbohydrate active -transport system, catalyzes the phosphorylation of incoming sugar substrates concomitantly with their translocation across the cell membrane.</text>
</comment>
<comment type="subcellular location">
    <subcellularLocation>
        <location evidence="4">Cell membrane</location>
        <topology evidence="4">Single-pass membrane protein</topology>
    </subcellularLocation>
</comment>
<comment type="domain">
    <text>The EIIB domain is phosphorylated by phospho-EIIA on a cysteinyl or histidyl residue, depending on the transported sugar. Then, it transfers the phosphoryl group to the sugar substrate concomitantly with the sugar uptake processed by the EIIC domain.</text>
</comment>
<reference key="1">
    <citation type="journal article" date="2002" name="Nucleic Acids Res.">
        <title>Genome sequence of Shigella flexneri 2a: insights into pathogenicity through comparison with genomes of Escherichia coli K12 and O157.</title>
        <authorList>
            <person name="Jin Q."/>
            <person name="Yuan Z."/>
            <person name="Xu J."/>
            <person name="Wang Y."/>
            <person name="Shen Y."/>
            <person name="Lu W."/>
            <person name="Wang J."/>
            <person name="Liu H."/>
            <person name="Yang J."/>
            <person name="Yang F."/>
            <person name="Zhang X."/>
            <person name="Zhang J."/>
            <person name="Yang G."/>
            <person name="Wu H."/>
            <person name="Qu D."/>
            <person name="Dong J."/>
            <person name="Sun L."/>
            <person name="Xue Y."/>
            <person name="Zhao A."/>
            <person name="Gao Y."/>
            <person name="Zhu J."/>
            <person name="Kan B."/>
            <person name="Ding K."/>
            <person name="Chen S."/>
            <person name="Cheng H."/>
            <person name="Yao Z."/>
            <person name="He B."/>
            <person name="Chen R."/>
            <person name="Ma D."/>
            <person name="Qiang B."/>
            <person name="Wen Y."/>
            <person name="Hou Y."/>
            <person name="Yu J."/>
        </authorList>
    </citation>
    <scope>NUCLEOTIDE SEQUENCE [LARGE SCALE GENOMIC DNA]</scope>
    <source>
        <strain>301 / Serotype 2a</strain>
    </source>
</reference>
<reference key="2">
    <citation type="journal article" date="2003" name="Infect. Immun.">
        <title>Complete genome sequence and comparative genomics of Shigella flexneri serotype 2a strain 2457T.</title>
        <authorList>
            <person name="Wei J."/>
            <person name="Goldberg M.B."/>
            <person name="Burland V."/>
            <person name="Venkatesan M.M."/>
            <person name="Deng W."/>
            <person name="Fournier G."/>
            <person name="Mayhew G.F."/>
            <person name="Plunkett G. III"/>
            <person name="Rose D.J."/>
            <person name="Darling A."/>
            <person name="Mau B."/>
            <person name="Perna N.T."/>
            <person name="Payne S.M."/>
            <person name="Runyen-Janecky L.J."/>
            <person name="Zhou S."/>
            <person name="Schwartz D.C."/>
            <person name="Blattner F.R."/>
        </authorList>
    </citation>
    <scope>NUCLEOTIDE SEQUENCE [LARGE SCALE GENOMIC DNA]</scope>
    <source>
        <strain>ATCC 700930 / 2457T / Serotype 2a</strain>
    </source>
</reference>
<dbReference type="EC" id="2.7.1.-"/>
<dbReference type="EMBL" id="AE005674">
    <property type="protein sequence ID" value="AAN45222.2"/>
    <property type="molecule type" value="Genomic_DNA"/>
</dbReference>
<dbReference type="EMBL" id="AE014073">
    <property type="protein sequence ID" value="AAP18975.1"/>
    <property type="molecule type" value="Genomic_DNA"/>
</dbReference>
<dbReference type="SMR" id="P69790"/>
<dbReference type="STRING" id="198214.SF3780"/>
<dbReference type="PaxDb" id="198214-SF3780"/>
<dbReference type="KEGG" id="sfx:S3989"/>
<dbReference type="HOGENOM" id="CLU_012312_8_1_6"/>
<dbReference type="Proteomes" id="UP000001006">
    <property type="component" value="Chromosome"/>
</dbReference>
<dbReference type="Proteomes" id="UP000002673">
    <property type="component" value="Chromosome"/>
</dbReference>
<dbReference type="GO" id="GO:0005886">
    <property type="term" value="C:plasma membrane"/>
    <property type="evidence" value="ECO:0007669"/>
    <property type="project" value="UniProtKB-SubCell"/>
</dbReference>
<dbReference type="GO" id="GO:0016301">
    <property type="term" value="F:kinase activity"/>
    <property type="evidence" value="ECO:0007669"/>
    <property type="project" value="UniProtKB-KW"/>
</dbReference>
<dbReference type="GO" id="GO:0008982">
    <property type="term" value="F:protein-N(PI)-phosphohistidine-sugar phosphotransferase activity"/>
    <property type="evidence" value="ECO:0007669"/>
    <property type="project" value="InterPro"/>
</dbReference>
<dbReference type="GO" id="GO:0090563">
    <property type="term" value="F:protein-phosphocysteine-sugar phosphotransferase activity"/>
    <property type="evidence" value="ECO:0007669"/>
    <property type="project" value="TreeGrafter"/>
</dbReference>
<dbReference type="GO" id="GO:0009401">
    <property type="term" value="P:phosphoenolpyruvate-dependent sugar phosphotransferase system"/>
    <property type="evidence" value="ECO:0007669"/>
    <property type="project" value="UniProtKB-KW"/>
</dbReference>
<dbReference type="CDD" id="cd00212">
    <property type="entry name" value="PTS_IIB_glc"/>
    <property type="match status" value="1"/>
</dbReference>
<dbReference type="Gene3D" id="3.30.1360.60">
    <property type="entry name" value="Glucose permease domain IIB"/>
    <property type="match status" value="1"/>
</dbReference>
<dbReference type="InterPro" id="IPR036878">
    <property type="entry name" value="Glu_permease_IIB"/>
</dbReference>
<dbReference type="InterPro" id="IPR018113">
    <property type="entry name" value="PTrfase_EIIB_Cys"/>
</dbReference>
<dbReference type="InterPro" id="IPR050429">
    <property type="entry name" value="PTS_Glucose_EIICBA"/>
</dbReference>
<dbReference type="InterPro" id="IPR001996">
    <property type="entry name" value="PTS_IIB_1"/>
</dbReference>
<dbReference type="NCBIfam" id="TIGR00826">
    <property type="entry name" value="EIIB_glc"/>
    <property type="match status" value="1"/>
</dbReference>
<dbReference type="NCBIfam" id="NF007255">
    <property type="entry name" value="PRK09702.1"/>
    <property type="match status" value="1"/>
</dbReference>
<dbReference type="PANTHER" id="PTHR30009">
    <property type="entry name" value="CYTOCHROME C-TYPE SYNTHESIS PROTEIN AND PTS TRANSMEMBRANE COMPONENT"/>
    <property type="match status" value="1"/>
</dbReference>
<dbReference type="PANTHER" id="PTHR30009:SF12">
    <property type="entry name" value="PHOSPHOTRANSFERASE IIC COMPONENT GLVC"/>
    <property type="match status" value="1"/>
</dbReference>
<dbReference type="Pfam" id="PF00367">
    <property type="entry name" value="PTS_EIIB"/>
    <property type="match status" value="1"/>
</dbReference>
<dbReference type="SUPFAM" id="SSF55604">
    <property type="entry name" value="Glucose permease domain IIB"/>
    <property type="match status" value="1"/>
</dbReference>
<dbReference type="PROSITE" id="PS51098">
    <property type="entry name" value="PTS_EIIB_TYPE_1"/>
    <property type="match status" value="1"/>
</dbReference>
<dbReference type="PROSITE" id="PS01035">
    <property type="entry name" value="PTS_EIIB_TYPE_1_CYS"/>
    <property type="match status" value="1"/>
</dbReference>
<evidence type="ECO:0000250" key="1"/>
<evidence type="ECO:0000255" key="2"/>
<evidence type="ECO:0000255" key="3">
    <source>
        <dbReference type="PROSITE-ProRule" id="PRU00421"/>
    </source>
</evidence>
<evidence type="ECO:0000305" key="4"/>
<proteinExistence type="inferred from homology"/>
<keyword id="KW-1003">Cell membrane</keyword>
<keyword id="KW-0418">Kinase</keyword>
<keyword id="KW-0472">Membrane</keyword>
<keyword id="KW-0598">Phosphotransferase system</keyword>
<keyword id="KW-1185">Reference proteome</keyword>
<keyword id="KW-0762">Sugar transport</keyword>
<keyword id="KW-0808">Transferase</keyword>
<keyword id="KW-0812">Transmembrane</keyword>
<keyword id="KW-1133">Transmembrane helix</keyword>
<keyword id="KW-0813">Transport</keyword>
<organism>
    <name type="scientific">Shigella flexneri</name>
    <dbReference type="NCBI Taxonomy" id="623"/>
    <lineage>
        <taxon>Bacteria</taxon>
        <taxon>Pseudomonadati</taxon>
        <taxon>Pseudomonadota</taxon>
        <taxon>Gammaproteobacteria</taxon>
        <taxon>Enterobacterales</taxon>
        <taxon>Enterobacteriaceae</taxon>
        <taxon>Shigella</taxon>
    </lineage>
</organism>
<feature type="chain" id="PRO_0000186581" description="Phosphotransferase enzyme IIB component GlvB">
    <location>
        <begin position="1"/>
        <end position="161"/>
    </location>
</feature>
<feature type="transmembrane region" description="Helical" evidence="2">
    <location>
        <begin position="10"/>
        <end position="32"/>
    </location>
</feature>
<feature type="domain" description="PTS EIIB type-1" evidence="3">
    <location>
        <begin position="70"/>
        <end position="152"/>
    </location>
</feature>
<feature type="active site" description="Phosphocysteine intermediate" evidence="1">
    <location>
        <position position="92"/>
    </location>
</feature>
<accession>P69790</accession>
<accession>P31451</accession>